<comment type="function">
    <text evidence="1">Forms part of the ribosomal stalk which helps the ribosome interact with GTP-bound translation factors.</text>
</comment>
<comment type="subunit">
    <text evidence="1">Part of the ribosomal stalk of the 50S ribosomal subunit. Interacts with L10 and the large rRNA to form the base of the stalk. L10 forms an elongated spine to which L12 dimers bind in a sequential fashion forming a multimeric L10(L12)X complex.</text>
</comment>
<comment type="PTM">
    <text evidence="1">One or more lysine residues are methylated.</text>
</comment>
<comment type="similarity">
    <text evidence="1">Belongs to the universal ribosomal protein uL11 family.</text>
</comment>
<keyword id="KW-0488">Methylation</keyword>
<keyword id="KW-0687">Ribonucleoprotein</keyword>
<keyword id="KW-0689">Ribosomal protein</keyword>
<keyword id="KW-0694">RNA-binding</keyword>
<keyword id="KW-0699">rRNA-binding</keyword>
<dbReference type="EMBL" id="BX571856">
    <property type="protein sequence ID" value="CAG39563.1"/>
    <property type="molecule type" value="Genomic_DNA"/>
</dbReference>
<dbReference type="RefSeq" id="WP_001085792.1">
    <property type="nucleotide sequence ID" value="NC_002952.2"/>
</dbReference>
<dbReference type="SMR" id="Q6GJD1"/>
<dbReference type="GeneID" id="98344871"/>
<dbReference type="KEGG" id="sar:SAR0542"/>
<dbReference type="HOGENOM" id="CLU_074237_2_1_9"/>
<dbReference type="Proteomes" id="UP000000596">
    <property type="component" value="Chromosome"/>
</dbReference>
<dbReference type="GO" id="GO:0022625">
    <property type="term" value="C:cytosolic large ribosomal subunit"/>
    <property type="evidence" value="ECO:0007669"/>
    <property type="project" value="TreeGrafter"/>
</dbReference>
<dbReference type="GO" id="GO:0070180">
    <property type="term" value="F:large ribosomal subunit rRNA binding"/>
    <property type="evidence" value="ECO:0007669"/>
    <property type="project" value="UniProtKB-UniRule"/>
</dbReference>
<dbReference type="GO" id="GO:0003735">
    <property type="term" value="F:structural constituent of ribosome"/>
    <property type="evidence" value="ECO:0007669"/>
    <property type="project" value="InterPro"/>
</dbReference>
<dbReference type="GO" id="GO:0006412">
    <property type="term" value="P:translation"/>
    <property type="evidence" value="ECO:0007669"/>
    <property type="project" value="UniProtKB-UniRule"/>
</dbReference>
<dbReference type="CDD" id="cd00349">
    <property type="entry name" value="Ribosomal_L11"/>
    <property type="match status" value="1"/>
</dbReference>
<dbReference type="FunFam" id="1.10.10.250:FF:000001">
    <property type="entry name" value="50S ribosomal protein L11"/>
    <property type="match status" value="1"/>
</dbReference>
<dbReference type="FunFam" id="3.30.1550.10:FF:000001">
    <property type="entry name" value="50S ribosomal protein L11"/>
    <property type="match status" value="1"/>
</dbReference>
<dbReference type="Gene3D" id="1.10.10.250">
    <property type="entry name" value="Ribosomal protein L11, C-terminal domain"/>
    <property type="match status" value="1"/>
</dbReference>
<dbReference type="Gene3D" id="3.30.1550.10">
    <property type="entry name" value="Ribosomal protein L11/L12, N-terminal domain"/>
    <property type="match status" value="1"/>
</dbReference>
<dbReference type="HAMAP" id="MF_00736">
    <property type="entry name" value="Ribosomal_uL11"/>
    <property type="match status" value="1"/>
</dbReference>
<dbReference type="InterPro" id="IPR000911">
    <property type="entry name" value="Ribosomal_uL11"/>
</dbReference>
<dbReference type="InterPro" id="IPR006519">
    <property type="entry name" value="Ribosomal_uL11_bac-typ"/>
</dbReference>
<dbReference type="InterPro" id="IPR020783">
    <property type="entry name" value="Ribosomal_uL11_C"/>
</dbReference>
<dbReference type="InterPro" id="IPR036769">
    <property type="entry name" value="Ribosomal_uL11_C_sf"/>
</dbReference>
<dbReference type="InterPro" id="IPR020785">
    <property type="entry name" value="Ribosomal_uL11_CS"/>
</dbReference>
<dbReference type="InterPro" id="IPR020784">
    <property type="entry name" value="Ribosomal_uL11_N"/>
</dbReference>
<dbReference type="InterPro" id="IPR036796">
    <property type="entry name" value="Ribosomal_uL11_N_sf"/>
</dbReference>
<dbReference type="NCBIfam" id="TIGR01632">
    <property type="entry name" value="L11_bact"/>
    <property type="match status" value="1"/>
</dbReference>
<dbReference type="PANTHER" id="PTHR11661">
    <property type="entry name" value="60S RIBOSOMAL PROTEIN L12"/>
    <property type="match status" value="1"/>
</dbReference>
<dbReference type="PANTHER" id="PTHR11661:SF1">
    <property type="entry name" value="LARGE RIBOSOMAL SUBUNIT PROTEIN UL11M"/>
    <property type="match status" value="1"/>
</dbReference>
<dbReference type="Pfam" id="PF00298">
    <property type="entry name" value="Ribosomal_L11"/>
    <property type="match status" value="1"/>
</dbReference>
<dbReference type="Pfam" id="PF03946">
    <property type="entry name" value="Ribosomal_L11_N"/>
    <property type="match status" value="1"/>
</dbReference>
<dbReference type="SMART" id="SM00649">
    <property type="entry name" value="RL11"/>
    <property type="match status" value="1"/>
</dbReference>
<dbReference type="SUPFAM" id="SSF54747">
    <property type="entry name" value="Ribosomal L11/L12e N-terminal domain"/>
    <property type="match status" value="1"/>
</dbReference>
<dbReference type="SUPFAM" id="SSF46906">
    <property type="entry name" value="Ribosomal protein L11, C-terminal domain"/>
    <property type="match status" value="1"/>
</dbReference>
<dbReference type="PROSITE" id="PS00359">
    <property type="entry name" value="RIBOSOMAL_L11"/>
    <property type="match status" value="1"/>
</dbReference>
<proteinExistence type="inferred from homology"/>
<organism>
    <name type="scientific">Staphylococcus aureus (strain MRSA252)</name>
    <dbReference type="NCBI Taxonomy" id="282458"/>
    <lineage>
        <taxon>Bacteria</taxon>
        <taxon>Bacillati</taxon>
        <taxon>Bacillota</taxon>
        <taxon>Bacilli</taxon>
        <taxon>Bacillales</taxon>
        <taxon>Staphylococcaceae</taxon>
        <taxon>Staphylococcus</taxon>
    </lineage>
</organism>
<sequence>MAKKVDKVVKLQIPAGKANPAPPVGPALGQAGVNIMGFCKEFNARTQDQAGLIIPVEISVYEDRSFTFITKTPPAPVLLKKAAGIEKGSGEPNKTKVATVTKDQVREIANSKMQDLNAADEEAAMRIIEGTARSMGIVVE</sequence>
<protein>
    <recommendedName>
        <fullName evidence="1">Large ribosomal subunit protein uL11</fullName>
    </recommendedName>
    <alternativeName>
        <fullName evidence="2">50S ribosomal protein L11</fullName>
    </alternativeName>
</protein>
<name>RL11_STAAR</name>
<reference key="1">
    <citation type="journal article" date="2004" name="Proc. Natl. Acad. Sci. U.S.A.">
        <title>Complete genomes of two clinical Staphylococcus aureus strains: evidence for the rapid evolution of virulence and drug resistance.</title>
        <authorList>
            <person name="Holden M.T.G."/>
            <person name="Feil E.J."/>
            <person name="Lindsay J.A."/>
            <person name="Peacock S.J."/>
            <person name="Day N.P.J."/>
            <person name="Enright M.C."/>
            <person name="Foster T.J."/>
            <person name="Moore C.E."/>
            <person name="Hurst L."/>
            <person name="Atkin R."/>
            <person name="Barron A."/>
            <person name="Bason N."/>
            <person name="Bentley S.D."/>
            <person name="Chillingworth C."/>
            <person name="Chillingworth T."/>
            <person name="Churcher C."/>
            <person name="Clark L."/>
            <person name="Corton C."/>
            <person name="Cronin A."/>
            <person name="Doggett J."/>
            <person name="Dowd L."/>
            <person name="Feltwell T."/>
            <person name="Hance Z."/>
            <person name="Harris B."/>
            <person name="Hauser H."/>
            <person name="Holroyd S."/>
            <person name="Jagels K."/>
            <person name="James K.D."/>
            <person name="Lennard N."/>
            <person name="Line A."/>
            <person name="Mayes R."/>
            <person name="Moule S."/>
            <person name="Mungall K."/>
            <person name="Ormond D."/>
            <person name="Quail M.A."/>
            <person name="Rabbinowitsch E."/>
            <person name="Rutherford K.M."/>
            <person name="Sanders M."/>
            <person name="Sharp S."/>
            <person name="Simmonds M."/>
            <person name="Stevens K."/>
            <person name="Whitehead S."/>
            <person name="Barrell B.G."/>
            <person name="Spratt B.G."/>
            <person name="Parkhill J."/>
        </authorList>
    </citation>
    <scope>NUCLEOTIDE SEQUENCE [LARGE SCALE GENOMIC DNA]</scope>
    <source>
        <strain>MRSA252</strain>
    </source>
</reference>
<gene>
    <name evidence="1" type="primary">rplK</name>
    <name type="ordered locus">SAR0542</name>
</gene>
<accession>Q6GJD1</accession>
<feature type="chain" id="PRO_0000104365" description="Large ribosomal subunit protein uL11">
    <location>
        <begin position="1"/>
        <end position="140"/>
    </location>
</feature>
<evidence type="ECO:0000255" key="1">
    <source>
        <dbReference type="HAMAP-Rule" id="MF_00736"/>
    </source>
</evidence>
<evidence type="ECO:0000305" key="2"/>